<proteinExistence type="inferred from homology"/>
<dbReference type="EMBL" id="AP009552">
    <property type="protein sequence ID" value="BAG04097.1"/>
    <property type="molecule type" value="Genomic_DNA"/>
</dbReference>
<dbReference type="RefSeq" id="WP_002800099.1">
    <property type="nucleotide sequence ID" value="NC_010296.1"/>
</dbReference>
<dbReference type="SMR" id="B0JSD9"/>
<dbReference type="STRING" id="449447.MAE_42750"/>
<dbReference type="PaxDb" id="449447-MAE_42750"/>
<dbReference type="EnsemblBacteria" id="BAG04097">
    <property type="protein sequence ID" value="BAG04097"/>
    <property type="gene ID" value="MAE_42750"/>
</dbReference>
<dbReference type="GeneID" id="66707201"/>
<dbReference type="KEGG" id="mar:MAE_42750"/>
<dbReference type="eggNOG" id="COG0051">
    <property type="taxonomic scope" value="Bacteria"/>
</dbReference>
<dbReference type="HOGENOM" id="CLU_122625_1_3_3"/>
<dbReference type="BioCyc" id="MAER449447:MAE_RS18550-MONOMER"/>
<dbReference type="Proteomes" id="UP000001510">
    <property type="component" value="Chromosome"/>
</dbReference>
<dbReference type="GO" id="GO:1990904">
    <property type="term" value="C:ribonucleoprotein complex"/>
    <property type="evidence" value="ECO:0007669"/>
    <property type="project" value="UniProtKB-KW"/>
</dbReference>
<dbReference type="GO" id="GO:0005840">
    <property type="term" value="C:ribosome"/>
    <property type="evidence" value="ECO:0007669"/>
    <property type="project" value="UniProtKB-KW"/>
</dbReference>
<dbReference type="GO" id="GO:0003735">
    <property type="term" value="F:structural constituent of ribosome"/>
    <property type="evidence" value="ECO:0007669"/>
    <property type="project" value="InterPro"/>
</dbReference>
<dbReference type="GO" id="GO:0000049">
    <property type="term" value="F:tRNA binding"/>
    <property type="evidence" value="ECO:0007669"/>
    <property type="project" value="UniProtKB-UniRule"/>
</dbReference>
<dbReference type="GO" id="GO:0006412">
    <property type="term" value="P:translation"/>
    <property type="evidence" value="ECO:0007669"/>
    <property type="project" value="UniProtKB-UniRule"/>
</dbReference>
<dbReference type="FunFam" id="3.30.70.600:FF:000001">
    <property type="entry name" value="30S ribosomal protein S10"/>
    <property type="match status" value="1"/>
</dbReference>
<dbReference type="Gene3D" id="3.30.70.600">
    <property type="entry name" value="Ribosomal protein S10 domain"/>
    <property type="match status" value="1"/>
</dbReference>
<dbReference type="HAMAP" id="MF_00508">
    <property type="entry name" value="Ribosomal_uS10"/>
    <property type="match status" value="1"/>
</dbReference>
<dbReference type="InterPro" id="IPR001848">
    <property type="entry name" value="Ribosomal_uS10"/>
</dbReference>
<dbReference type="InterPro" id="IPR018268">
    <property type="entry name" value="Ribosomal_uS10_CS"/>
</dbReference>
<dbReference type="InterPro" id="IPR027486">
    <property type="entry name" value="Ribosomal_uS10_dom"/>
</dbReference>
<dbReference type="InterPro" id="IPR036838">
    <property type="entry name" value="Ribosomal_uS10_dom_sf"/>
</dbReference>
<dbReference type="NCBIfam" id="NF001861">
    <property type="entry name" value="PRK00596.1"/>
    <property type="match status" value="1"/>
</dbReference>
<dbReference type="NCBIfam" id="TIGR01049">
    <property type="entry name" value="rpsJ_bact"/>
    <property type="match status" value="1"/>
</dbReference>
<dbReference type="PANTHER" id="PTHR11700">
    <property type="entry name" value="30S RIBOSOMAL PROTEIN S10 FAMILY MEMBER"/>
    <property type="match status" value="1"/>
</dbReference>
<dbReference type="Pfam" id="PF00338">
    <property type="entry name" value="Ribosomal_S10"/>
    <property type="match status" value="1"/>
</dbReference>
<dbReference type="PRINTS" id="PR00971">
    <property type="entry name" value="RIBOSOMALS10"/>
</dbReference>
<dbReference type="SMART" id="SM01403">
    <property type="entry name" value="Ribosomal_S10"/>
    <property type="match status" value="1"/>
</dbReference>
<dbReference type="SUPFAM" id="SSF54999">
    <property type="entry name" value="Ribosomal protein S10"/>
    <property type="match status" value="1"/>
</dbReference>
<dbReference type="PROSITE" id="PS00361">
    <property type="entry name" value="RIBOSOMAL_S10"/>
    <property type="match status" value="1"/>
</dbReference>
<name>RS10_MICAN</name>
<comment type="function">
    <text evidence="1">Involved in the binding of tRNA to the ribosomes.</text>
</comment>
<comment type="subunit">
    <text evidence="1">Part of the 30S ribosomal subunit.</text>
</comment>
<comment type="similarity">
    <text evidence="1">Belongs to the universal ribosomal protein uS10 family.</text>
</comment>
<accession>B0JSD9</accession>
<reference key="1">
    <citation type="journal article" date="2007" name="DNA Res.">
        <title>Complete genomic structure of the bloom-forming toxic cyanobacterium Microcystis aeruginosa NIES-843.</title>
        <authorList>
            <person name="Kaneko T."/>
            <person name="Nakajima N."/>
            <person name="Okamoto S."/>
            <person name="Suzuki I."/>
            <person name="Tanabe Y."/>
            <person name="Tamaoki M."/>
            <person name="Nakamura Y."/>
            <person name="Kasai F."/>
            <person name="Watanabe A."/>
            <person name="Kawashima K."/>
            <person name="Kishida Y."/>
            <person name="Ono A."/>
            <person name="Shimizu Y."/>
            <person name="Takahashi C."/>
            <person name="Minami C."/>
            <person name="Fujishiro T."/>
            <person name="Kohara M."/>
            <person name="Katoh M."/>
            <person name="Nakazaki N."/>
            <person name="Nakayama S."/>
            <person name="Yamada M."/>
            <person name="Tabata S."/>
            <person name="Watanabe M.M."/>
        </authorList>
    </citation>
    <scope>NUCLEOTIDE SEQUENCE [LARGE SCALE GENOMIC DNA]</scope>
    <source>
        <strain>NIES-843 / IAM M-247</strain>
    </source>
</reference>
<protein>
    <recommendedName>
        <fullName evidence="1">Small ribosomal subunit protein uS10</fullName>
    </recommendedName>
    <alternativeName>
        <fullName evidence="2">30S ribosomal protein S10</fullName>
    </alternativeName>
</protein>
<feature type="chain" id="PRO_1000081555" description="Small ribosomal subunit protein uS10">
    <location>
        <begin position="1"/>
        <end position="105"/>
    </location>
</feature>
<evidence type="ECO:0000255" key="1">
    <source>
        <dbReference type="HAMAP-Rule" id="MF_00508"/>
    </source>
</evidence>
<evidence type="ECO:0000305" key="2"/>
<sequence>MATLQQQKIRIRLKAFDRRLLDTSCEKIVDTANRTNATAIGPIPLPTKRKIYCVLRSPHVDKDSREHFETRTHRRIIDIYQPSSKTIDALMKLDLPAGVDIEVKL</sequence>
<keyword id="KW-0687">Ribonucleoprotein</keyword>
<keyword id="KW-0689">Ribosomal protein</keyword>
<organism>
    <name type="scientific">Microcystis aeruginosa (strain NIES-843 / IAM M-2473)</name>
    <dbReference type="NCBI Taxonomy" id="449447"/>
    <lineage>
        <taxon>Bacteria</taxon>
        <taxon>Bacillati</taxon>
        <taxon>Cyanobacteriota</taxon>
        <taxon>Cyanophyceae</taxon>
        <taxon>Oscillatoriophycideae</taxon>
        <taxon>Chroococcales</taxon>
        <taxon>Microcystaceae</taxon>
        <taxon>Microcystis</taxon>
    </lineage>
</organism>
<gene>
    <name evidence="1" type="primary">rpsJ</name>
    <name evidence="1" type="synonym">rps10</name>
    <name type="ordered locus">MAE_42750</name>
</gene>